<accession>B5Y1L5</accession>
<reference key="1">
    <citation type="journal article" date="2008" name="PLoS Genet.">
        <title>Complete genome sequence of the N2-fixing broad host range endophyte Klebsiella pneumoniae 342 and virulence predictions verified in mice.</title>
        <authorList>
            <person name="Fouts D.E."/>
            <person name="Tyler H.L."/>
            <person name="DeBoy R.T."/>
            <person name="Daugherty S."/>
            <person name="Ren Q."/>
            <person name="Badger J.H."/>
            <person name="Durkin A.S."/>
            <person name="Huot H."/>
            <person name="Shrivastava S."/>
            <person name="Kothari S."/>
            <person name="Dodson R.J."/>
            <person name="Mohamoud Y."/>
            <person name="Khouri H."/>
            <person name="Roesch L.F.W."/>
            <person name="Krogfelt K.A."/>
            <person name="Struve C."/>
            <person name="Triplett E.W."/>
            <person name="Methe B.A."/>
        </authorList>
    </citation>
    <scope>NUCLEOTIDE SEQUENCE [LARGE SCALE GENOMIC DNA]</scope>
    <source>
        <strain>342</strain>
    </source>
</reference>
<name>GSA_KLEP3</name>
<protein>
    <recommendedName>
        <fullName evidence="1">Glutamate-1-semialdehyde 2,1-aminomutase</fullName>
        <shortName evidence="1">GSA</shortName>
        <ecNumber evidence="1">5.4.3.8</ecNumber>
    </recommendedName>
    <alternativeName>
        <fullName evidence="1">Glutamate-1-semialdehyde aminotransferase</fullName>
        <shortName evidence="1">GSA-AT</shortName>
    </alternativeName>
</protein>
<keyword id="KW-0963">Cytoplasm</keyword>
<keyword id="KW-0413">Isomerase</keyword>
<keyword id="KW-0627">Porphyrin biosynthesis</keyword>
<keyword id="KW-0663">Pyridoxal phosphate</keyword>
<feature type="chain" id="PRO_1000121898" description="Glutamate-1-semialdehyde 2,1-aminomutase">
    <location>
        <begin position="1"/>
        <end position="426"/>
    </location>
</feature>
<feature type="modified residue" description="N6-(pyridoxal phosphate)lysine" evidence="1">
    <location>
        <position position="265"/>
    </location>
</feature>
<comment type="catalytic activity">
    <reaction evidence="1">
        <text>(S)-4-amino-5-oxopentanoate = 5-aminolevulinate</text>
        <dbReference type="Rhea" id="RHEA:14265"/>
        <dbReference type="ChEBI" id="CHEBI:57501"/>
        <dbReference type="ChEBI" id="CHEBI:356416"/>
        <dbReference type="EC" id="5.4.3.8"/>
    </reaction>
</comment>
<comment type="cofactor">
    <cofactor evidence="1">
        <name>pyridoxal 5'-phosphate</name>
        <dbReference type="ChEBI" id="CHEBI:597326"/>
    </cofactor>
</comment>
<comment type="pathway">
    <text evidence="1">Porphyrin-containing compound metabolism; protoporphyrin-IX biosynthesis; 5-aminolevulinate from L-glutamyl-tRNA(Glu): step 2/2.</text>
</comment>
<comment type="subunit">
    <text evidence="1">Homodimer.</text>
</comment>
<comment type="subcellular location">
    <subcellularLocation>
        <location evidence="1">Cytoplasm</location>
    </subcellularLocation>
</comment>
<comment type="similarity">
    <text evidence="1">Belongs to the class-III pyridoxal-phosphate-dependent aminotransferase family. HemL subfamily.</text>
</comment>
<proteinExistence type="inferred from homology"/>
<gene>
    <name evidence="1" type="primary">hemL</name>
    <name type="ordered locus">KPK_4564</name>
</gene>
<dbReference type="EC" id="5.4.3.8" evidence="1"/>
<dbReference type="EMBL" id="CP000964">
    <property type="protein sequence ID" value="ACI11303.1"/>
    <property type="molecule type" value="Genomic_DNA"/>
</dbReference>
<dbReference type="SMR" id="B5Y1L5"/>
<dbReference type="KEGG" id="kpe:KPK_4564"/>
<dbReference type="HOGENOM" id="CLU_016922_1_5_6"/>
<dbReference type="UniPathway" id="UPA00251">
    <property type="reaction ID" value="UER00317"/>
</dbReference>
<dbReference type="Proteomes" id="UP000001734">
    <property type="component" value="Chromosome"/>
</dbReference>
<dbReference type="GO" id="GO:0005737">
    <property type="term" value="C:cytoplasm"/>
    <property type="evidence" value="ECO:0007669"/>
    <property type="project" value="UniProtKB-SubCell"/>
</dbReference>
<dbReference type="GO" id="GO:0042286">
    <property type="term" value="F:glutamate-1-semialdehyde 2,1-aminomutase activity"/>
    <property type="evidence" value="ECO:0007669"/>
    <property type="project" value="UniProtKB-UniRule"/>
</dbReference>
<dbReference type="GO" id="GO:0030170">
    <property type="term" value="F:pyridoxal phosphate binding"/>
    <property type="evidence" value="ECO:0007669"/>
    <property type="project" value="InterPro"/>
</dbReference>
<dbReference type="GO" id="GO:0008483">
    <property type="term" value="F:transaminase activity"/>
    <property type="evidence" value="ECO:0007669"/>
    <property type="project" value="InterPro"/>
</dbReference>
<dbReference type="GO" id="GO:0006782">
    <property type="term" value="P:protoporphyrinogen IX biosynthetic process"/>
    <property type="evidence" value="ECO:0007669"/>
    <property type="project" value="UniProtKB-UniRule"/>
</dbReference>
<dbReference type="CDD" id="cd00610">
    <property type="entry name" value="OAT_like"/>
    <property type="match status" value="1"/>
</dbReference>
<dbReference type="FunFam" id="3.40.640.10:FF:000021">
    <property type="entry name" value="Glutamate-1-semialdehyde 2,1-aminomutase"/>
    <property type="match status" value="1"/>
</dbReference>
<dbReference type="FunFam" id="3.90.1150.10:FF:000012">
    <property type="entry name" value="Glutamate-1-semialdehyde 2,1-aminomutase"/>
    <property type="match status" value="1"/>
</dbReference>
<dbReference type="Gene3D" id="3.90.1150.10">
    <property type="entry name" value="Aspartate Aminotransferase, domain 1"/>
    <property type="match status" value="1"/>
</dbReference>
<dbReference type="Gene3D" id="3.40.640.10">
    <property type="entry name" value="Type I PLP-dependent aspartate aminotransferase-like (Major domain)"/>
    <property type="match status" value="1"/>
</dbReference>
<dbReference type="HAMAP" id="MF_00375">
    <property type="entry name" value="HemL_aminotrans_3"/>
    <property type="match status" value="1"/>
</dbReference>
<dbReference type="InterPro" id="IPR004639">
    <property type="entry name" value="4pyrrol_synth_GluAld_NH2Trfase"/>
</dbReference>
<dbReference type="InterPro" id="IPR005814">
    <property type="entry name" value="Aminotrans_3"/>
</dbReference>
<dbReference type="InterPro" id="IPR049704">
    <property type="entry name" value="Aminotrans_3_PPA_site"/>
</dbReference>
<dbReference type="InterPro" id="IPR015424">
    <property type="entry name" value="PyrdxlP-dep_Trfase"/>
</dbReference>
<dbReference type="InterPro" id="IPR015421">
    <property type="entry name" value="PyrdxlP-dep_Trfase_major"/>
</dbReference>
<dbReference type="InterPro" id="IPR015422">
    <property type="entry name" value="PyrdxlP-dep_Trfase_small"/>
</dbReference>
<dbReference type="NCBIfam" id="TIGR00713">
    <property type="entry name" value="hemL"/>
    <property type="match status" value="1"/>
</dbReference>
<dbReference type="NCBIfam" id="NF000818">
    <property type="entry name" value="PRK00062.1"/>
    <property type="match status" value="1"/>
</dbReference>
<dbReference type="PANTHER" id="PTHR43713">
    <property type="entry name" value="GLUTAMATE-1-SEMIALDEHYDE 2,1-AMINOMUTASE"/>
    <property type="match status" value="1"/>
</dbReference>
<dbReference type="PANTHER" id="PTHR43713:SF3">
    <property type="entry name" value="GLUTAMATE-1-SEMIALDEHYDE 2,1-AMINOMUTASE 1, CHLOROPLASTIC-RELATED"/>
    <property type="match status" value="1"/>
</dbReference>
<dbReference type="Pfam" id="PF00202">
    <property type="entry name" value="Aminotran_3"/>
    <property type="match status" value="1"/>
</dbReference>
<dbReference type="SUPFAM" id="SSF53383">
    <property type="entry name" value="PLP-dependent transferases"/>
    <property type="match status" value="1"/>
</dbReference>
<dbReference type="PROSITE" id="PS00600">
    <property type="entry name" value="AA_TRANSFER_CLASS_3"/>
    <property type="match status" value="1"/>
</dbReference>
<evidence type="ECO:0000255" key="1">
    <source>
        <dbReference type="HAMAP-Rule" id="MF_00375"/>
    </source>
</evidence>
<sequence length="426" mass="45388">MSKSENLYHAARELIPGGVNSPVRAFTGVGGTPLFIERADGAYLYDVDGKAYIDYVGSWGPMVLGHNHPAIRNAVIEAASRGLSFGAPTEMEVKMAELVTELVPTMDMVRMVNSGTEATMSAIRLARGFTGRDKIIKFEGCYHGHADCLLVKAGSGALTLGQPNSPGVPADFAKHTLTCTYNDLASVRAAFEQYPQDIACIIVEPVAGNMNCIPPQPEFLPGLRALCDEFGALLIIDEVMTGFRVALAGAQAYYGVEPDLTCLGKIIGGGMPVGAFGGRREVMDALAPTGPVYQAGTLSGNPIAMAAGFACLSEVAQPGVHETLTELTNQLADGLLNAARETGIPLVVNNVGGMFGIFFTDAETVTCYQDVVKCDVERFKRFFHLMLEEGVYLAPSAFEAGFMSIAHSEEDINNTIDAARRVFAKL</sequence>
<organism>
    <name type="scientific">Klebsiella pneumoniae (strain 342)</name>
    <dbReference type="NCBI Taxonomy" id="507522"/>
    <lineage>
        <taxon>Bacteria</taxon>
        <taxon>Pseudomonadati</taxon>
        <taxon>Pseudomonadota</taxon>
        <taxon>Gammaproteobacteria</taxon>
        <taxon>Enterobacterales</taxon>
        <taxon>Enterobacteriaceae</taxon>
        <taxon>Klebsiella/Raoultella group</taxon>
        <taxon>Klebsiella</taxon>
        <taxon>Klebsiella pneumoniae complex</taxon>
    </lineage>
</organism>